<gene>
    <name evidence="7" type="ordered locus">SCATT_56060</name>
</gene>
<protein>
    <recommendedName>
        <fullName evidence="4">Drimenyl diphosphate synthase</fullName>
        <shortName evidence="4">DMS</shortName>
        <ecNumber evidence="3">5.4.99.-</ecNumber>
    </recommendedName>
</protein>
<reference key="1">
    <citation type="submission" date="2011-12" db="EMBL/GenBank/DDBJ databases">
        <title>Complete genome sequence of Streptomyces cattleya strain DSM 46488.</title>
        <authorList>
            <person name="Ou H.-Y."/>
            <person name="Li P."/>
            <person name="Zhao C."/>
            <person name="O'Hagan D."/>
            <person name="Deng Z."/>
        </authorList>
    </citation>
    <scope>NUCLEOTIDE SEQUENCE [LARGE SCALE GENOMIC DNA]</scope>
    <source>
        <strain>ATCC 35852 / DSM 46488 / JCM 4925 / NBRC 14057 / NCIMB 11928 / NRRL 8057 / MA-4297</strain>
    </source>
</reference>
<reference key="2">
    <citation type="journal article" date="2022" name="J. Am. Chem. Soc.">
        <title>Discovery, Structure, and Mechanism of a Class II Sesquiterpene Cyclase.</title>
        <authorList>
            <person name="Pan X."/>
            <person name="Du W."/>
            <person name="Zhang X."/>
            <person name="Lin X."/>
            <person name="Li F.R."/>
            <person name="Yang Q."/>
            <person name="Wang H."/>
            <person name="Rudolf J.D."/>
            <person name="Zhang B."/>
            <person name="Dong L.B."/>
        </authorList>
    </citation>
    <scope>FUNCTION</scope>
    <scope>CATALYTIC ACTIVITY</scope>
    <source>
        <strain>ATCC 35852 / DSM 46488 / JCM 4925 / NBRC 14057 / NCIMB 11928 / NRRL 8057 / MA-4297</strain>
    </source>
</reference>
<comment type="function">
    <text evidence="3">Catalyzes the cyclization of farnesyl diphosphate (FPP) to drimenyl diphosphate.</text>
</comment>
<comment type="catalytic activity">
    <reaction evidence="3">
        <text>(2E,6E)-farnesyl diphosphate = (5S,9S,10S)-drim-7-en-11-yl diphosphate</text>
        <dbReference type="Rhea" id="RHEA:81103"/>
        <dbReference type="ChEBI" id="CHEBI:149665"/>
        <dbReference type="ChEBI" id="CHEBI:175763"/>
    </reaction>
    <physiologicalReaction direction="left-to-right" evidence="6">
        <dbReference type="Rhea" id="RHEA:81104"/>
    </physiologicalReaction>
</comment>
<comment type="cofactor">
    <cofactor evidence="1">
        <name>Mg(2+)</name>
        <dbReference type="ChEBI" id="CHEBI:18420"/>
    </cofactor>
    <cofactor evidence="1">
        <name>Ni(2+)</name>
        <dbReference type="ChEBI" id="CHEBI:49786"/>
    </cofactor>
    <cofactor evidence="1">
        <name>Co(2+)</name>
        <dbReference type="ChEBI" id="CHEBI:48828"/>
    </cofactor>
    <text evidence="1">Requires a divalent metal cation for activity. Binds a binuclear Mg(2+) cluster coordinated with Glu-158 and the diphosphate moiety of FPP.</text>
</comment>
<comment type="similarity">
    <text evidence="5">Belongs to the terpene cyclase/mutase family.</text>
</comment>
<dbReference type="EC" id="5.4.99.-" evidence="3"/>
<dbReference type="EMBL" id="CP003219">
    <property type="protein sequence ID" value="AEW97977.1"/>
    <property type="molecule type" value="Genomic_DNA"/>
</dbReference>
<dbReference type="RefSeq" id="WP_014146309.1">
    <property type="nucleotide sequence ID" value="NC_016111.1"/>
</dbReference>
<dbReference type="SMR" id="F8JSS1"/>
<dbReference type="STRING" id="1003195.SCATT_56060"/>
<dbReference type="KEGG" id="sct:SCAT_5607"/>
<dbReference type="KEGG" id="scy:SCATT_56060"/>
<dbReference type="PATRIC" id="fig|1003195.11.peg.7021"/>
<dbReference type="eggNOG" id="COG1657">
    <property type="taxonomic scope" value="Bacteria"/>
</dbReference>
<dbReference type="HOGENOM" id="CLU_511826_0_0_11"/>
<dbReference type="OrthoDB" id="5484461at2"/>
<dbReference type="Proteomes" id="UP000007842">
    <property type="component" value="Chromosome"/>
</dbReference>
<dbReference type="GO" id="GO:0016853">
    <property type="term" value="F:isomerase activity"/>
    <property type="evidence" value="ECO:0007669"/>
    <property type="project" value="UniProtKB-KW"/>
</dbReference>
<dbReference type="GO" id="GO:0046872">
    <property type="term" value="F:metal ion binding"/>
    <property type="evidence" value="ECO:0007669"/>
    <property type="project" value="UniProtKB-KW"/>
</dbReference>
<dbReference type="CDD" id="cd00688">
    <property type="entry name" value="ISOPREN_C2_like"/>
    <property type="match status" value="1"/>
</dbReference>
<dbReference type="Gene3D" id="1.50.10.20">
    <property type="match status" value="1"/>
</dbReference>
<dbReference type="InterPro" id="IPR001330">
    <property type="entry name" value="Prenyltrans"/>
</dbReference>
<dbReference type="InterPro" id="IPR008930">
    <property type="entry name" value="Terpenoid_cyclase/PrenylTrfase"/>
</dbReference>
<dbReference type="Pfam" id="PF00432">
    <property type="entry name" value="Prenyltrans"/>
    <property type="match status" value="1"/>
</dbReference>
<dbReference type="SUPFAM" id="SSF48239">
    <property type="entry name" value="Terpenoid cyclases/Protein prenyltransferases"/>
    <property type="match status" value="1"/>
</dbReference>
<evidence type="ECO:0000250" key="1">
    <source>
        <dbReference type="UniProtKB" id="A0A2P2GK84"/>
    </source>
</evidence>
<evidence type="ECO:0000255" key="2"/>
<evidence type="ECO:0000269" key="3">
    <source>
    </source>
</evidence>
<evidence type="ECO:0000303" key="4">
    <source>
    </source>
</evidence>
<evidence type="ECO:0000305" key="5"/>
<evidence type="ECO:0000305" key="6">
    <source>
    </source>
</evidence>
<evidence type="ECO:0000312" key="7">
    <source>
        <dbReference type="EMBL" id="AEW97977.1"/>
    </source>
</evidence>
<keyword id="KW-0413">Isomerase</keyword>
<keyword id="KW-0460">Magnesium</keyword>
<keyword id="KW-0479">Metal-binding</keyword>
<keyword id="KW-1185">Reference proteome</keyword>
<keyword id="KW-0677">Repeat</keyword>
<accession>F8JSS1</accession>
<accession>G8X1A9</accession>
<proteinExistence type="evidence at protein level"/>
<organism>
    <name type="scientific">Streptantibioticus cattleyicolor (strain ATCC 35852 / DSM 46488 / JCM 4925 / NBRC 14057 / NRRL 8057)</name>
    <name type="common">Streptomyces cattleya</name>
    <dbReference type="NCBI Taxonomy" id="1003195"/>
    <lineage>
        <taxon>Bacteria</taxon>
        <taxon>Bacillati</taxon>
        <taxon>Actinomycetota</taxon>
        <taxon>Actinomycetes</taxon>
        <taxon>Kitasatosporales</taxon>
        <taxon>Streptomycetaceae</taxon>
        <taxon>Streptantibioticus</taxon>
    </lineage>
</organism>
<sequence>MITSSLLSRPGRTAPAGSAALRCRDRLAQRVADQVGPDGLVKAPCASRVLESSLLLRLLTVEGYAPHVRERLTRYLRNRLEHRPPDAIQGAVARAALGERLPGGCFAERALASFDHFTADRKRLMFTTLLAELGVTVFPRTRPEAFTARGQQSWLQAEMAALKIMTAYGTGTTGLLTERDWFLLAPAVRPGPVWEGNHFARLLALLALRKNPAHRGAVRRTLEAVTADLRPDGGLPFITGMDIFATAIAGLALTGPAACAHAGHRPVRCGTGPLPAAMADALATRQNPDGGFAFTPGVRQSDVDDTSYTVEFLRVAGPYRHRSAIAAAERYLLAVRNPDGGFPTFARGTPSEIAMTAAAVNALAPNPAHRTVVDEALAFLTRRRQPDGILERSWSRNVTNAVFRTTLACAAAGPGAPPGLSRAAGTTKRQATRYLASVQNLDGGWGHHPGDASDPISTAYAVIALSRDGGHPTALARALDHLVRAQRPDGGYRSRPDQAGPRPLLYDVPALADVCVLLGLAHAVGPTARPRV</sequence>
<name>DMS_STREN</name>
<feature type="chain" id="PRO_0000461418" description="Drimenyl diphosphate synthase">
    <location>
        <begin position="1"/>
        <end position="532"/>
    </location>
</feature>
<feature type="repeat" description="PFTB 1" evidence="2">
    <location>
        <begin position="275"/>
        <end position="317"/>
    </location>
</feature>
<feature type="repeat" description="PFTB 2" evidence="2">
    <location>
        <begin position="325"/>
        <end position="367"/>
    </location>
</feature>
<feature type="repeat" description="PFTB 3" evidence="2">
    <location>
        <begin position="428"/>
        <end position="469"/>
    </location>
</feature>
<feature type="repeat" description="PFTB 4" evidence="2">
    <location>
        <begin position="475"/>
        <end position="518"/>
    </location>
</feature>
<feature type="active site" description="Proton donor" evidence="1">
    <location>
        <position position="304"/>
    </location>
</feature>
<feature type="binding site" evidence="1">
    <location>
        <position position="121"/>
    </location>
    <ligand>
        <name>(2E,6E)-farnesyl diphosphate</name>
        <dbReference type="ChEBI" id="CHEBI:175763"/>
    </ligand>
</feature>
<feature type="binding site" evidence="1">
    <location>
        <position position="122"/>
    </location>
    <ligand>
        <name>(2E,6E)-farnesyl diphosphate</name>
        <dbReference type="ChEBI" id="CHEBI:175763"/>
    </ligand>
</feature>
<feature type="binding site" evidence="1">
    <location>
        <position position="152"/>
    </location>
    <ligand>
        <name>(2E,6E)-farnesyl diphosphate</name>
        <dbReference type="ChEBI" id="CHEBI:175763"/>
    </ligand>
</feature>
<feature type="binding site" evidence="1">
    <location>
        <position position="154"/>
    </location>
    <ligand>
        <name>(2E,6E)-farnesyl diphosphate</name>
        <dbReference type="ChEBI" id="CHEBI:175763"/>
    </ligand>
</feature>
<feature type="binding site" evidence="1">
    <location>
        <position position="158"/>
    </location>
    <ligand>
        <name>Mg(2+)</name>
        <dbReference type="ChEBI" id="CHEBI:18420"/>
        <label>1</label>
    </ligand>
</feature>
<feature type="binding site" evidence="1">
    <location>
        <position position="158"/>
    </location>
    <ligand>
        <name>Mg(2+)</name>
        <dbReference type="ChEBI" id="CHEBI:18420"/>
        <label>2</label>
    </ligand>
</feature>
<feature type="binding site" evidence="1">
    <location>
        <position position="502"/>
    </location>
    <ligand>
        <name>(2E,6E)-farnesyl diphosphate</name>
        <dbReference type="ChEBI" id="CHEBI:175763"/>
    </ligand>
</feature>